<sequence>MDNIEQRVKKIVAEQLGVAEADIKNESSFVNDLGADSLDTVELVMALEDEFGMEIPDEEAEKITTVQQAIDYATAHVKA</sequence>
<protein>
    <recommendedName>
        <fullName evidence="1">Acyl carrier protein</fullName>
        <shortName evidence="1">ACP</shortName>
    </recommendedName>
</protein>
<reference key="1">
    <citation type="journal article" date="2006" name="Nat. Biotechnol.">
        <title>Genome sequence of the bioplastic-producing 'Knallgas' bacterium Ralstonia eutropha H16.</title>
        <authorList>
            <person name="Pohlmann A."/>
            <person name="Fricke W.F."/>
            <person name="Reinecke F."/>
            <person name="Kusian B."/>
            <person name="Liesegang H."/>
            <person name="Cramm R."/>
            <person name="Eitinger T."/>
            <person name="Ewering C."/>
            <person name="Poetter M."/>
            <person name="Schwartz E."/>
            <person name="Strittmatter A."/>
            <person name="Voss I."/>
            <person name="Gottschalk G."/>
            <person name="Steinbuechel A."/>
            <person name="Friedrich B."/>
            <person name="Bowien B."/>
        </authorList>
    </citation>
    <scope>NUCLEOTIDE SEQUENCE [LARGE SCALE GENOMIC DNA]</scope>
    <source>
        <strain>ATCC 17699 / DSM 428 / KCTC 22496 / NCIMB 10442 / H16 / Stanier 337</strain>
    </source>
</reference>
<evidence type="ECO:0000255" key="1">
    <source>
        <dbReference type="HAMAP-Rule" id="MF_01217"/>
    </source>
</evidence>
<evidence type="ECO:0000255" key="2">
    <source>
        <dbReference type="PROSITE-ProRule" id="PRU00258"/>
    </source>
</evidence>
<dbReference type="EMBL" id="AM260479">
    <property type="protein sequence ID" value="CAJ93649.1"/>
    <property type="molecule type" value="Genomic_DNA"/>
</dbReference>
<dbReference type="RefSeq" id="WP_008644813.1">
    <property type="nucleotide sequence ID" value="NZ_CP039287.1"/>
</dbReference>
<dbReference type="SMR" id="Q0K8M2"/>
<dbReference type="STRING" id="381666.H16_A2566"/>
<dbReference type="GeneID" id="98343534"/>
<dbReference type="KEGG" id="reh:H16_A2566"/>
<dbReference type="eggNOG" id="COG0236">
    <property type="taxonomic scope" value="Bacteria"/>
</dbReference>
<dbReference type="HOGENOM" id="CLU_108696_5_1_4"/>
<dbReference type="OrthoDB" id="9804551at2"/>
<dbReference type="UniPathway" id="UPA00094"/>
<dbReference type="Proteomes" id="UP000008210">
    <property type="component" value="Chromosome 1"/>
</dbReference>
<dbReference type="GO" id="GO:0005829">
    <property type="term" value="C:cytosol"/>
    <property type="evidence" value="ECO:0007669"/>
    <property type="project" value="TreeGrafter"/>
</dbReference>
<dbReference type="GO" id="GO:0016020">
    <property type="term" value="C:membrane"/>
    <property type="evidence" value="ECO:0007669"/>
    <property type="project" value="GOC"/>
</dbReference>
<dbReference type="GO" id="GO:0000035">
    <property type="term" value="F:acyl binding"/>
    <property type="evidence" value="ECO:0007669"/>
    <property type="project" value="TreeGrafter"/>
</dbReference>
<dbReference type="GO" id="GO:0000036">
    <property type="term" value="F:acyl carrier activity"/>
    <property type="evidence" value="ECO:0007669"/>
    <property type="project" value="UniProtKB-UniRule"/>
</dbReference>
<dbReference type="GO" id="GO:0009245">
    <property type="term" value="P:lipid A biosynthetic process"/>
    <property type="evidence" value="ECO:0007669"/>
    <property type="project" value="TreeGrafter"/>
</dbReference>
<dbReference type="FunFam" id="1.10.1200.10:FF:000001">
    <property type="entry name" value="Acyl carrier protein"/>
    <property type="match status" value="1"/>
</dbReference>
<dbReference type="Gene3D" id="1.10.1200.10">
    <property type="entry name" value="ACP-like"/>
    <property type="match status" value="1"/>
</dbReference>
<dbReference type="HAMAP" id="MF_01217">
    <property type="entry name" value="Acyl_carrier"/>
    <property type="match status" value="1"/>
</dbReference>
<dbReference type="InterPro" id="IPR003231">
    <property type="entry name" value="ACP"/>
</dbReference>
<dbReference type="InterPro" id="IPR036736">
    <property type="entry name" value="ACP-like_sf"/>
</dbReference>
<dbReference type="InterPro" id="IPR009081">
    <property type="entry name" value="PP-bd_ACP"/>
</dbReference>
<dbReference type="InterPro" id="IPR006162">
    <property type="entry name" value="Ppantetheine_attach_site"/>
</dbReference>
<dbReference type="NCBIfam" id="TIGR00517">
    <property type="entry name" value="acyl_carrier"/>
    <property type="match status" value="1"/>
</dbReference>
<dbReference type="NCBIfam" id="NF002148">
    <property type="entry name" value="PRK00982.1-2"/>
    <property type="match status" value="1"/>
</dbReference>
<dbReference type="NCBIfam" id="NF002149">
    <property type="entry name" value="PRK00982.1-3"/>
    <property type="match status" value="1"/>
</dbReference>
<dbReference type="NCBIfam" id="NF002150">
    <property type="entry name" value="PRK00982.1-4"/>
    <property type="match status" value="1"/>
</dbReference>
<dbReference type="NCBIfam" id="NF002151">
    <property type="entry name" value="PRK00982.1-5"/>
    <property type="match status" value="1"/>
</dbReference>
<dbReference type="PANTHER" id="PTHR20863">
    <property type="entry name" value="ACYL CARRIER PROTEIN"/>
    <property type="match status" value="1"/>
</dbReference>
<dbReference type="PANTHER" id="PTHR20863:SF76">
    <property type="entry name" value="CARRIER DOMAIN-CONTAINING PROTEIN"/>
    <property type="match status" value="1"/>
</dbReference>
<dbReference type="Pfam" id="PF00550">
    <property type="entry name" value="PP-binding"/>
    <property type="match status" value="1"/>
</dbReference>
<dbReference type="SUPFAM" id="SSF47336">
    <property type="entry name" value="ACP-like"/>
    <property type="match status" value="1"/>
</dbReference>
<dbReference type="PROSITE" id="PS50075">
    <property type="entry name" value="CARRIER"/>
    <property type="match status" value="1"/>
</dbReference>
<dbReference type="PROSITE" id="PS00012">
    <property type="entry name" value="PHOSPHOPANTETHEINE"/>
    <property type="match status" value="1"/>
</dbReference>
<accession>Q0K8M2</accession>
<name>ACP_CUPNH</name>
<proteinExistence type="inferred from homology"/>
<comment type="function">
    <text evidence="1">Carrier of the growing fatty acid chain in fatty acid biosynthesis.</text>
</comment>
<comment type="pathway">
    <text evidence="1">Lipid metabolism; fatty acid biosynthesis.</text>
</comment>
<comment type="subcellular location">
    <subcellularLocation>
        <location evidence="1">Cytoplasm</location>
    </subcellularLocation>
</comment>
<comment type="PTM">
    <text evidence="1">4'-phosphopantetheine is transferred from CoA to a specific serine of apo-ACP by AcpS. This modification is essential for activity because fatty acids are bound in thioester linkage to the sulfhydryl of the prosthetic group.</text>
</comment>
<comment type="similarity">
    <text evidence="1">Belongs to the acyl carrier protein (ACP) family.</text>
</comment>
<feature type="chain" id="PRO_1000066666" description="Acyl carrier protein">
    <location>
        <begin position="1"/>
        <end position="79"/>
    </location>
</feature>
<feature type="domain" description="Carrier" evidence="2">
    <location>
        <begin position="2"/>
        <end position="77"/>
    </location>
</feature>
<feature type="modified residue" description="O-(pantetheine 4'-phosphoryl)serine" evidence="2">
    <location>
        <position position="37"/>
    </location>
</feature>
<keyword id="KW-0963">Cytoplasm</keyword>
<keyword id="KW-0275">Fatty acid biosynthesis</keyword>
<keyword id="KW-0276">Fatty acid metabolism</keyword>
<keyword id="KW-0444">Lipid biosynthesis</keyword>
<keyword id="KW-0443">Lipid metabolism</keyword>
<keyword id="KW-0596">Phosphopantetheine</keyword>
<keyword id="KW-0597">Phosphoprotein</keyword>
<keyword id="KW-1185">Reference proteome</keyword>
<gene>
    <name evidence="1" type="primary">acpP</name>
    <name type="ordered locus">H16_A2566</name>
</gene>
<organism>
    <name type="scientific">Cupriavidus necator (strain ATCC 17699 / DSM 428 / KCTC 22496 / NCIMB 10442 / H16 / Stanier 337)</name>
    <name type="common">Ralstonia eutropha</name>
    <dbReference type="NCBI Taxonomy" id="381666"/>
    <lineage>
        <taxon>Bacteria</taxon>
        <taxon>Pseudomonadati</taxon>
        <taxon>Pseudomonadota</taxon>
        <taxon>Betaproteobacteria</taxon>
        <taxon>Burkholderiales</taxon>
        <taxon>Burkholderiaceae</taxon>
        <taxon>Cupriavidus</taxon>
    </lineage>
</organism>